<comment type="function">
    <text evidence="1">O-methyltransferase that transfers a methyl group from S-adenosyl-L-methionine (SAM) to the carboxyl group of juvenile hormone acids to produce active juvenile hormones in the corpora allata, the last step during juvenile hormone biosynthesis (PubMed:14530389). Also able to methylate farnesoate to methyl farnesoate (PubMed:14530389).</text>
</comment>
<comment type="catalytic activity">
    <reaction evidence="1">
        <text>(2E,6E)-farnesoate + S-adenosyl-L-methionine = methyl (2E,6E)-farnesoate + S-adenosyl-L-homocysteine</text>
        <dbReference type="Rhea" id="RHEA:43700"/>
        <dbReference type="ChEBI" id="CHEBI:57856"/>
        <dbReference type="ChEBI" id="CHEBI:59789"/>
        <dbReference type="ChEBI" id="CHEBI:80535"/>
        <dbReference type="ChEBI" id="CHEBI:83276"/>
        <dbReference type="EC" id="2.1.1.325"/>
    </reaction>
</comment>
<comment type="catalytic activity">
    <reaction evidence="1">
        <text>juvenile hormone III carboxylate + S-adenosyl-L-methionine = juvenile hormone III + S-adenosyl-L-homocysteine</text>
        <dbReference type="Rhea" id="RHEA:43720"/>
        <dbReference type="ChEBI" id="CHEBI:27493"/>
        <dbReference type="ChEBI" id="CHEBI:57856"/>
        <dbReference type="ChEBI" id="CHEBI:59789"/>
        <dbReference type="ChEBI" id="CHEBI:83274"/>
        <dbReference type="EC" id="2.1.1.325"/>
    </reaction>
</comment>
<comment type="tissue specificity">
    <text evidence="1">Specifically expressed in the corpora allata (CA).</text>
</comment>
<comment type="developmental stage">
    <text evidence="1">Expressed throughout the third and fourth instar. At the beginning of the last (fifth) instar, the expression decreases rapidly and becomes undetectable by day 4 and until pupation.</text>
</comment>
<comment type="similarity">
    <text evidence="3">Belongs to the methyltransferase superfamily.</text>
</comment>
<feature type="chain" id="PRO_0000433618" description="Juvenile hormone acid O-methyltransferase">
    <location>
        <begin position="1"/>
        <end position="278"/>
    </location>
</feature>
<feature type="sequence conflict" description="In Ref. 2; AEV45620." evidence="3" ref="2">
    <original>K</original>
    <variation>R</variation>
    <location>
        <position position="213"/>
    </location>
</feature>
<feature type="sequence conflict" description="In Ref. 2; AEV45620." evidence="3" ref="2">
    <original>D</original>
    <variation>G</variation>
    <location>
        <position position="247"/>
    </location>
</feature>
<proteinExistence type="evidence at protein level"/>
<gene>
    <name evidence="2" type="primary">JHAMT</name>
    <name type="ORF">BGIBMGA010391</name>
</gene>
<dbReference type="EC" id="2.1.1.325" evidence="1"/>
<dbReference type="EMBL" id="AB113578">
    <property type="protein sequence ID" value="BAC98835.1"/>
    <property type="molecule type" value="mRNA"/>
</dbReference>
<dbReference type="EMBL" id="JN851817">
    <property type="protein sequence ID" value="AEV45620.1"/>
    <property type="molecule type" value="mRNA"/>
</dbReference>
<dbReference type="RefSeq" id="NP_001036901.1">
    <property type="nucleotide sequence ID" value="NM_001043436.1"/>
</dbReference>
<dbReference type="SMR" id="Q767F1"/>
<dbReference type="FunCoup" id="Q767F1">
    <property type="interactions" value="13"/>
</dbReference>
<dbReference type="STRING" id="7091.Q767F1"/>
<dbReference type="PaxDb" id="7091-BGIBMGA010391-TA"/>
<dbReference type="EnsemblMetazoa" id="NM_001043436.1">
    <property type="protein sequence ID" value="NP_001036901.1"/>
    <property type="gene ID" value="GeneID_692445"/>
</dbReference>
<dbReference type="EnsemblMetazoa" id="XM_038014267.1">
    <property type="protein sequence ID" value="XP_037870195.1"/>
    <property type="gene ID" value="GeneID_692445"/>
</dbReference>
<dbReference type="GeneID" id="692445"/>
<dbReference type="KEGG" id="bmor:692445"/>
<dbReference type="CTD" id="34977"/>
<dbReference type="eggNOG" id="ENOG502S1MZ">
    <property type="taxonomic scope" value="Eukaryota"/>
</dbReference>
<dbReference type="HOGENOM" id="CLU_037990_5_0_1"/>
<dbReference type="InParanoid" id="Q767F1"/>
<dbReference type="OrthoDB" id="618246at7088"/>
<dbReference type="BioCyc" id="MetaCyc:MONOMER-15959"/>
<dbReference type="BRENDA" id="2.1.1.325">
    <property type="organism ID" value="890"/>
</dbReference>
<dbReference type="Proteomes" id="UP000005204">
    <property type="component" value="Unassembled WGS sequence"/>
</dbReference>
<dbReference type="GO" id="GO:0019010">
    <property type="term" value="F:farnesoic acid O-methyltransferase activity"/>
    <property type="evidence" value="ECO:0000314"/>
    <property type="project" value="UniProtKB"/>
</dbReference>
<dbReference type="GO" id="GO:0006718">
    <property type="term" value="P:juvenile hormone biosynthetic process"/>
    <property type="evidence" value="ECO:0000314"/>
    <property type="project" value="UniProtKB"/>
</dbReference>
<dbReference type="GO" id="GO:0032259">
    <property type="term" value="P:methylation"/>
    <property type="evidence" value="ECO:0000314"/>
    <property type="project" value="UniProtKB"/>
</dbReference>
<dbReference type="CDD" id="cd02440">
    <property type="entry name" value="AdoMet_MTases"/>
    <property type="match status" value="1"/>
</dbReference>
<dbReference type="FunFam" id="3.40.50.150:FF:000539">
    <property type="entry name" value="juvenile hormone acid O-methyltransferase"/>
    <property type="match status" value="1"/>
</dbReference>
<dbReference type="Gene3D" id="3.40.50.150">
    <property type="entry name" value="Vaccinia Virus protein VP39"/>
    <property type="match status" value="1"/>
</dbReference>
<dbReference type="InterPro" id="IPR025714">
    <property type="entry name" value="Methyltranfer_dom"/>
</dbReference>
<dbReference type="InterPro" id="IPR029063">
    <property type="entry name" value="SAM-dependent_MTases_sf"/>
</dbReference>
<dbReference type="PANTHER" id="PTHR43861:SF1">
    <property type="entry name" value="TRANS-ACONITATE 2-METHYLTRANSFERASE"/>
    <property type="match status" value="1"/>
</dbReference>
<dbReference type="PANTHER" id="PTHR43861">
    <property type="entry name" value="TRANS-ACONITATE 2-METHYLTRANSFERASE-RELATED"/>
    <property type="match status" value="1"/>
</dbReference>
<dbReference type="Pfam" id="PF13847">
    <property type="entry name" value="Methyltransf_31"/>
    <property type="match status" value="1"/>
</dbReference>
<dbReference type="SUPFAM" id="SSF53335">
    <property type="entry name" value="S-adenosyl-L-methionine-dependent methyltransferases"/>
    <property type="match status" value="1"/>
</dbReference>
<reference key="1">
    <citation type="journal article" date="2003" name="Proc. Natl. Acad. Sci. U.S.A.">
        <title>Juvenile hormone acid methyltransferase: a key regulatory enzyme for insect metamorphosis.</title>
        <authorList>
            <person name="Shinoda T."/>
            <person name="Itoyama K."/>
        </authorList>
    </citation>
    <scope>NUCLEOTIDE SEQUENCE [MRNA]</scope>
    <scope>FUNCTION</scope>
    <scope>CATALYTIC ACTIVITY</scope>
    <scope>TISSUE SPECIFICITY</scope>
    <scope>DEVELOPMENTAL STAGE</scope>
    <source>
        <strain>Kinshu X Showa</strain>
        <tissue>Corpora allata</tissue>
    </source>
</reference>
<reference key="2">
    <citation type="submission" date="2011-10" db="EMBL/GenBank/DDBJ databases">
        <title>Molecular characterisation of jhamt gene from Bombyx mori.</title>
        <authorList>
            <person name="Raji P.T."/>
            <person name="Sinto M.S."/>
            <person name="Omkumar R.V."/>
            <person name="Bhaskaran G."/>
            <person name="Muraleedharan D."/>
        </authorList>
    </citation>
    <scope>NUCLEOTIDE SEQUENCE [MRNA]</scope>
    <source>
        <tissue>Corpora allata</tissue>
    </source>
</reference>
<reference key="3">
    <citation type="journal article" date="2008" name="Insect Biochem. Mol. Biol.">
        <title>The genome of a lepidopteran model insect, the silkworm Bombyx mori.</title>
        <authorList>
            <consortium name="International Silkworm Genome Consortium"/>
        </authorList>
    </citation>
    <scope>NUCLEOTIDE SEQUENCE [LARGE SCALE GENOMIC DNA]</scope>
    <source>
        <strain>p50T</strain>
    </source>
</reference>
<organism>
    <name type="scientific">Bombyx mori</name>
    <name type="common">Silk moth</name>
    <dbReference type="NCBI Taxonomy" id="7091"/>
    <lineage>
        <taxon>Eukaryota</taxon>
        <taxon>Metazoa</taxon>
        <taxon>Ecdysozoa</taxon>
        <taxon>Arthropoda</taxon>
        <taxon>Hexapoda</taxon>
        <taxon>Insecta</taxon>
        <taxon>Pterygota</taxon>
        <taxon>Neoptera</taxon>
        <taxon>Endopterygota</taxon>
        <taxon>Lepidoptera</taxon>
        <taxon>Glossata</taxon>
        <taxon>Ditrysia</taxon>
        <taxon>Bombycoidea</taxon>
        <taxon>Bombycidae</taxon>
        <taxon>Bombycinae</taxon>
        <taxon>Bombyx</taxon>
    </lineage>
</organism>
<accession>Q767F1</accession>
<accession>G9JKK5</accession>
<accession>H9JLJ0</accession>
<sequence length="278" mass="32546">MNNADLYRKSNSLQKRDALRCLEEHANKIKWKKIGDRVIDLGCADGSVTDILKVYMPKNYGRLVGCDISEEMVKYANKHHGFGRTSFRVLDIEGDLTADLKQGFDHVFSFYTLHWIRDQERAFRNIFNLLGDEGDCLLLFLGHTPIFDVYRTLSHTEKWHSWLEHVDRFISPYHDNEDPEKEVKKIMERVGFSNIEVQCKTLFYVYDDLDVLKKSVAAINPFNIPKDILEDFLEDYIDVVREMRLLDRCNNNVGESVSIKFNYKVISVYARKLCLSLM</sequence>
<name>JHAMT_BOMMO</name>
<evidence type="ECO:0000269" key="1">
    <source>
    </source>
</evidence>
<evidence type="ECO:0000303" key="2">
    <source>
    </source>
</evidence>
<evidence type="ECO:0000305" key="3"/>
<keyword id="KW-0489">Methyltransferase</keyword>
<keyword id="KW-1185">Reference proteome</keyword>
<keyword id="KW-0949">S-adenosyl-L-methionine</keyword>
<keyword id="KW-0808">Transferase</keyword>
<protein>
    <recommendedName>
        <fullName evidence="3">Juvenile hormone acid O-methyltransferase</fullName>
        <ecNumber evidence="1">2.1.1.325</ecNumber>
    </recommendedName>
    <alternativeName>
        <fullName evidence="2">Juvenile hormone acid methyltransferase</fullName>
        <shortName evidence="2">BmJHAMT</shortName>
    </alternativeName>
</protein>